<protein>
    <recommendedName>
        <fullName>Carboxylesterase 1C</fullName>
        <ecNumber>3.1.1.1</ecNumber>
    </recommendedName>
    <alternativeName>
        <fullName>Liver carboxylesterase N</fullName>
    </alternativeName>
    <alternativeName>
        <fullName>Lung surfactant convertase</fullName>
    </alternativeName>
    <alternativeName>
        <fullName>PES-N</fullName>
    </alternativeName>
</protein>
<accession>P23953</accession>
<accession>E9QQ07</accession>
<accession>O54936</accession>
<accession>P11374</accession>
<accession>Q8K125</accession>
<evidence type="ECO:0000250" key="1"/>
<evidence type="ECO:0000250" key="2">
    <source>
        <dbReference type="UniProtKB" id="P10959"/>
    </source>
</evidence>
<evidence type="ECO:0000255" key="3"/>
<evidence type="ECO:0000255" key="4">
    <source>
        <dbReference type="PROSITE-ProRule" id="PRU10039"/>
    </source>
</evidence>
<evidence type="ECO:0000269" key="5">
    <source>
    </source>
</evidence>
<evidence type="ECO:0000269" key="6">
    <source>
    </source>
</evidence>
<evidence type="ECO:0000269" key="7">
    <source>
    </source>
</evidence>
<evidence type="ECO:0000305" key="8"/>
<dbReference type="EC" id="3.1.1.1"/>
<dbReference type="EMBL" id="M57960">
    <property type="protein sequence ID" value="AAA63297.1"/>
    <property type="molecule type" value="mRNA"/>
</dbReference>
<dbReference type="EMBL" id="AF034435">
    <property type="protein sequence ID" value="AAC04708.1"/>
    <property type="molecule type" value="mRNA"/>
</dbReference>
<dbReference type="EMBL" id="AC121985">
    <property type="status" value="NOT_ANNOTATED_CDS"/>
    <property type="molecule type" value="Genomic_DNA"/>
</dbReference>
<dbReference type="EMBL" id="AC162949">
    <property type="status" value="NOT_ANNOTATED_CDS"/>
    <property type="molecule type" value="Genomic_DNA"/>
</dbReference>
<dbReference type="EMBL" id="BC028907">
    <property type="protein sequence ID" value="AAH28907.1"/>
    <property type="molecule type" value="mRNA"/>
</dbReference>
<dbReference type="EMBL" id="M19677">
    <property type="protein sequence ID" value="AAA37579.1"/>
    <property type="status" value="ALT_SEQ"/>
    <property type="molecule type" value="mRNA"/>
</dbReference>
<dbReference type="CCDS" id="CCDS22527.1"/>
<dbReference type="PIR" id="A27686">
    <property type="entry name" value="A27686"/>
</dbReference>
<dbReference type="PIR" id="A39060">
    <property type="entry name" value="A39060"/>
</dbReference>
<dbReference type="RefSeq" id="NP_031980.2">
    <property type="nucleotide sequence ID" value="NM_007954.4"/>
</dbReference>
<dbReference type="SMR" id="P23953"/>
<dbReference type="FunCoup" id="P23953">
    <property type="interactions" value="163"/>
</dbReference>
<dbReference type="IntAct" id="P23953">
    <property type="interactions" value="1"/>
</dbReference>
<dbReference type="MINT" id="P23953"/>
<dbReference type="STRING" id="10090.ENSMUSP00000034189"/>
<dbReference type="ESTHER" id="mouse-Ces1c">
    <property type="family name" value="Carb_B_Chordata"/>
</dbReference>
<dbReference type="MEROPS" id="S09.996"/>
<dbReference type="GlyConnect" id="779">
    <property type="glycosylation" value="1 N-Linked glycan (1 site)"/>
</dbReference>
<dbReference type="GlyCosmos" id="P23953">
    <property type="glycosylation" value="5 sites, 2 glycans"/>
</dbReference>
<dbReference type="GlyGen" id="P23953">
    <property type="glycosylation" value="6 sites, 5 N-linked glycans (4 sites), 1 O-linked glycan (1 site)"/>
</dbReference>
<dbReference type="iPTMnet" id="P23953"/>
<dbReference type="PhosphoSitePlus" id="P23953"/>
<dbReference type="SwissPalm" id="P23953"/>
<dbReference type="CPTAC" id="non-CPTAC-3800"/>
<dbReference type="jPOST" id="P23953"/>
<dbReference type="PaxDb" id="10090-ENSMUSP00000034189"/>
<dbReference type="PeptideAtlas" id="P23953"/>
<dbReference type="ProteomicsDB" id="275891"/>
<dbReference type="DNASU" id="13884"/>
<dbReference type="Ensembl" id="ENSMUST00000034189.17">
    <property type="protein sequence ID" value="ENSMUSP00000034189.9"/>
    <property type="gene ID" value="ENSMUSG00000057400.15"/>
</dbReference>
<dbReference type="GeneID" id="13884"/>
<dbReference type="KEGG" id="mmu:13884"/>
<dbReference type="UCSC" id="uc009mul.2">
    <property type="organism name" value="mouse"/>
</dbReference>
<dbReference type="AGR" id="MGI:95420"/>
<dbReference type="CTD" id="13884"/>
<dbReference type="MGI" id="MGI:95420">
    <property type="gene designation" value="Ces1c"/>
</dbReference>
<dbReference type="VEuPathDB" id="HostDB:ENSMUSG00000057400"/>
<dbReference type="eggNOG" id="KOG1516">
    <property type="taxonomic scope" value="Eukaryota"/>
</dbReference>
<dbReference type="GeneTree" id="ENSGT00940000154623"/>
<dbReference type="HOGENOM" id="CLU_006586_13_0_1"/>
<dbReference type="InParanoid" id="P23953"/>
<dbReference type="OMA" id="IATRDQY"/>
<dbReference type="OrthoDB" id="3200163at2759"/>
<dbReference type="PhylomeDB" id="P23953"/>
<dbReference type="TreeFam" id="TF315470"/>
<dbReference type="BRENDA" id="3.1.1.1">
    <property type="organism ID" value="3474"/>
</dbReference>
<dbReference type="BioGRID-ORCS" id="13884">
    <property type="hits" value="2 hits in 77 CRISPR screens"/>
</dbReference>
<dbReference type="ChiTaRS" id="Ces1c">
    <property type="organism name" value="mouse"/>
</dbReference>
<dbReference type="PRO" id="PR:P23953"/>
<dbReference type="Proteomes" id="UP000000589">
    <property type="component" value="Chromosome 8"/>
</dbReference>
<dbReference type="RNAct" id="P23953">
    <property type="molecule type" value="protein"/>
</dbReference>
<dbReference type="Bgee" id="ENSMUSG00000057400">
    <property type="expression patterns" value="Expressed in liver and 47 other cell types or tissues"/>
</dbReference>
<dbReference type="ExpressionAtlas" id="P23953">
    <property type="expression patterns" value="baseline and differential"/>
</dbReference>
<dbReference type="GO" id="GO:0005788">
    <property type="term" value="C:endoplasmic reticulum lumen"/>
    <property type="evidence" value="ECO:0007669"/>
    <property type="project" value="UniProtKB-SubCell"/>
</dbReference>
<dbReference type="GO" id="GO:0005615">
    <property type="term" value="C:extracellular space"/>
    <property type="evidence" value="ECO:0000314"/>
    <property type="project" value="MGI"/>
</dbReference>
<dbReference type="GO" id="GO:0106435">
    <property type="term" value="F:carboxylesterase activity"/>
    <property type="evidence" value="ECO:0000314"/>
    <property type="project" value="MGI"/>
</dbReference>
<dbReference type="GO" id="GO:0016788">
    <property type="term" value="F:hydrolase activity, acting on ester bonds"/>
    <property type="evidence" value="ECO:0000314"/>
    <property type="project" value="MGI"/>
</dbReference>
<dbReference type="GO" id="GO:0009617">
    <property type="term" value="P:response to bacterium"/>
    <property type="evidence" value="ECO:0000270"/>
    <property type="project" value="MGI"/>
</dbReference>
<dbReference type="CDD" id="cd00312">
    <property type="entry name" value="Esterase_lipase"/>
    <property type="match status" value="1"/>
</dbReference>
<dbReference type="FunFam" id="3.40.50.1820:FF:000011">
    <property type="entry name" value="Carboxylic ester hydrolase"/>
    <property type="match status" value="1"/>
</dbReference>
<dbReference type="Gene3D" id="3.40.50.1820">
    <property type="entry name" value="alpha/beta hydrolase"/>
    <property type="match status" value="1"/>
</dbReference>
<dbReference type="InterPro" id="IPR029058">
    <property type="entry name" value="AB_hydrolase_fold"/>
</dbReference>
<dbReference type="InterPro" id="IPR002018">
    <property type="entry name" value="CarbesteraseB"/>
</dbReference>
<dbReference type="InterPro" id="IPR019826">
    <property type="entry name" value="Carboxylesterase_B_AS"/>
</dbReference>
<dbReference type="InterPro" id="IPR019819">
    <property type="entry name" value="Carboxylesterase_B_CS"/>
</dbReference>
<dbReference type="InterPro" id="IPR050309">
    <property type="entry name" value="Type-B_Carboxylest/Lipase"/>
</dbReference>
<dbReference type="PANTHER" id="PTHR11559">
    <property type="entry name" value="CARBOXYLESTERASE"/>
    <property type="match status" value="1"/>
</dbReference>
<dbReference type="Pfam" id="PF00135">
    <property type="entry name" value="COesterase"/>
    <property type="match status" value="1"/>
</dbReference>
<dbReference type="SUPFAM" id="SSF53474">
    <property type="entry name" value="alpha/beta-Hydrolases"/>
    <property type="match status" value="1"/>
</dbReference>
<dbReference type="PROSITE" id="PS00122">
    <property type="entry name" value="CARBOXYLESTERASE_B_1"/>
    <property type="match status" value="1"/>
</dbReference>
<dbReference type="PROSITE" id="PS00941">
    <property type="entry name" value="CARBOXYLESTERASE_B_2"/>
    <property type="match status" value="1"/>
</dbReference>
<proteinExistence type="evidence at protein level"/>
<keyword id="KW-0903">Direct protein sequencing</keyword>
<keyword id="KW-1015">Disulfide bond</keyword>
<keyword id="KW-0256">Endoplasmic reticulum</keyword>
<keyword id="KW-0325">Glycoprotein</keyword>
<keyword id="KW-0378">Hydrolase</keyword>
<keyword id="KW-0597">Phosphoprotein</keyword>
<keyword id="KW-1185">Reference proteome</keyword>
<keyword id="KW-0719">Serine esterase</keyword>
<keyword id="KW-0732">Signal</keyword>
<comment type="function">
    <text>Involved in the detoxification of xenobiotics and in the activation of ester and amide prodrugs. Involved in the extracellular metabolism of lung surfactant.</text>
</comment>
<comment type="catalytic activity">
    <reaction evidence="4">
        <text>a carboxylic ester + H2O = an alcohol + a carboxylate + H(+)</text>
        <dbReference type="Rhea" id="RHEA:21164"/>
        <dbReference type="ChEBI" id="CHEBI:15377"/>
        <dbReference type="ChEBI" id="CHEBI:15378"/>
        <dbReference type="ChEBI" id="CHEBI:29067"/>
        <dbReference type="ChEBI" id="CHEBI:30879"/>
        <dbReference type="ChEBI" id="CHEBI:33308"/>
        <dbReference type="EC" id="3.1.1.1"/>
    </reaction>
</comment>
<comment type="subcellular location">
    <subcellularLocation>
        <location>Endoplasmic reticulum lumen</location>
    </subcellularLocation>
    <text>Microsomal membrane, lumen of endoplasmic reticulum.</text>
</comment>
<comment type="tissue specificity">
    <text evidence="7">Expressed in lung, kidney and liver.</text>
</comment>
<comment type="similarity">
    <text evidence="8">Belongs to the type-B carboxylesterase/lipase family.</text>
</comment>
<comment type="sequence caution" evidence="8">
    <conflict type="frameshift">
        <sequence resource="EMBL-CDS" id="AAA37579"/>
    </conflict>
</comment>
<comment type="sequence caution" evidence="8">
    <conflict type="miscellaneous discrepancy">
        <sequence resource="EMBL-CDS" id="AAA37579"/>
    </conflict>
    <text>Sequencing errors.</text>
</comment>
<feature type="signal peptide" evidence="1">
    <location>
        <begin position="1"/>
        <end position="18"/>
    </location>
</feature>
<feature type="chain" id="PRO_0000008574" description="Carboxylesterase 1C">
    <location>
        <begin position="19"/>
        <end position="554"/>
    </location>
</feature>
<feature type="short sequence motif" description="Prevents secretion from ER" evidence="3">
    <location>
        <begin position="551"/>
        <end position="554"/>
    </location>
</feature>
<feature type="active site" description="Acyl-ester intermediate" evidence="4">
    <location>
        <position position="221"/>
    </location>
</feature>
<feature type="active site" description="Charge relay system" evidence="1">
    <location>
        <position position="342"/>
    </location>
</feature>
<feature type="active site" description="Charge relay system" evidence="1">
    <location>
        <position position="455"/>
    </location>
</feature>
<feature type="modified residue" description="Phosphoserine" evidence="2">
    <location>
        <position position="473"/>
    </location>
</feature>
<feature type="glycosylation site" description="N-linked (GlcNAc...) asparagine" evidence="6">
    <location>
        <position position="79"/>
    </location>
</feature>
<feature type="glycosylation site" description="N-linked (GlcNAc...) asparagine" evidence="6">
    <location>
        <position position="274"/>
    </location>
</feature>
<feature type="glycosylation site" description="N-linked (GlcNAc...) asparagine" evidence="5 6">
    <location>
        <position position="304"/>
    </location>
</feature>
<feature type="glycosylation site" description="N-linked (GlcNAc...) asparagine" evidence="5 6">
    <location>
        <position position="377"/>
    </location>
</feature>
<feature type="glycosylation site" description="N-linked (GlcNAc...) asparagine" evidence="3">
    <location>
        <position position="478"/>
    </location>
</feature>
<feature type="disulfide bond" evidence="1">
    <location>
        <begin position="87"/>
        <end position="116"/>
    </location>
</feature>
<feature type="disulfide bond" evidence="1">
    <location>
        <begin position="273"/>
        <end position="284"/>
    </location>
</feature>
<feature type="sequence conflict" description="In Ref. 2; AAC04708 and 4; AAH28907." evidence="8" ref="2 4">
    <original>A</original>
    <variation>V</variation>
    <location>
        <position position="5"/>
    </location>
</feature>
<feature type="sequence conflict" description="In Ref. 4; AAH28907." evidence="8" ref="4">
    <original>I</original>
    <variation>L</variation>
    <location>
        <position position="96"/>
    </location>
</feature>
<feature type="sequence conflict" description="In Ref. 4; AAH28907." evidence="8" ref="4">
    <original>E</original>
    <variation>K</variation>
    <location>
        <position position="104"/>
    </location>
</feature>
<feature type="sequence conflict" description="In Ref. 1; AAA63297 and 2; AAC04708." evidence="8" ref="1 2">
    <original>A</original>
    <variation>R</variation>
    <location>
        <position position="149"/>
    </location>
</feature>
<feature type="sequence conflict" description="In Ref. 2; AAC04708 and 4; AAH28907." evidence="8" ref="2 4">
    <original>P</original>
    <variation>Q</variation>
    <location>
        <position position="186"/>
    </location>
</feature>
<feature type="sequence conflict" description="In Ref. 4; AAH28907." evidence="8" ref="4">
    <original>V</original>
    <variation>L</variation>
    <location>
        <position position="255"/>
    </location>
</feature>
<feature type="sequence conflict" description="In Ref. 2; AAC04708 and 4; AAH28907." evidence="8" ref="2 4">
    <original>M</original>
    <variation>V</variation>
    <location>
        <position position="310"/>
    </location>
</feature>
<feature type="sequence conflict" description="In Ref. 2; AAC04708 and 4; AAH28907." evidence="8" ref="2 4">
    <original>Q</original>
    <variation>K</variation>
    <location>
        <position position="389"/>
    </location>
</feature>
<feature type="sequence conflict" description="In Ref. 4; AAH28907." evidence="8" ref="4">
    <original>A</original>
    <variation>V</variation>
    <location>
        <position position="398"/>
    </location>
</feature>
<feature type="sequence conflict" description="In Ref. 2; AAC04708 and 4; AAH28907." evidence="8" ref="2 4">
    <original>L</original>
    <variation>M</variation>
    <location>
        <position position="420"/>
    </location>
</feature>
<feature type="sequence conflict" description="In Ref. 4; AAH28907." evidence="8" ref="4">
    <original>Y</original>
    <variation>S</variation>
    <location>
        <position position="432"/>
    </location>
</feature>
<feature type="sequence conflict" description="In Ref. 2; AAC04708 and 4; AAH28907." evidence="8" ref="2 4">
    <original>T</original>
    <variation>M</variation>
    <location>
        <position position="450"/>
    </location>
</feature>
<feature type="sequence conflict" description="In Ref. 2; AAC04708 and 4; AAH28907." evidence="8" ref="2 4">
    <original>F</original>
    <variation>S</variation>
    <location>
        <position position="461"/>
    </location>
</feature>
<feature type="sequence conflict" description="In Ref. 2; AAC04708 and 4; AAH28907." evidence="8" ref="2 4">
    <original>Q</original>
    <variation>K</variation>
    <location>
        <position position="510"/>
    </location>
</feature>
<feature type="sequence conflict" description="In Ref. 2; AAC04708 and 4; AAH28907." evidence="8" ref="2 4">
    <original>L</original>
    <variation>P</variation>
    <location>
        <position position="538"/>
    </location>
</feature>
<gene>
    <name type="primary">Ces1c</name>
    <name type="synonym">Es1</name>
</gene>
<organism>
    <name type="scientific">Mus musculus</name>
    <name type="common">Mouse</name>
    <dbReference type="NCBI Taxonomy" id="10090"/>
    <lineage>
        <taxon>Eukaryota</taxon>
        <taxon>Metazoa</taxon>
        <taxon>Chordata</taxon>
        <taxon>Craniata</taxon>
        <taxon>Vertebrata</taxon>
        <taxon>Euteleostomi</taxon>
        <taxon>Mammalia</taxon>
        <taxon>Eutheria</taxon>
        <taxon>Euarchontoglires</taxon>
        <taxon>Glires</taxon>
        <taxon>Rodentia</taxon>
        <taxon>Myomorpha</taxon>
        <taxon>Muroidea</taxon>
        <taxon>Muridae</taxon>
        <taxon>Murinae</taxon>
        <taxon>Mus</taxon>
        <taxon>Mus</taxon>
    </lineage>
</organism>
<sequence length="554" mass="61056">MWLHALVWASLAVCPILGHSLLPPVVDTTQGKVLGKYISLEGFEQPVAVFLGVPFAKPPLGSLRFAPPQPAEPWSFVKNATSYPPMCSQDAGWAKILSDMFSTEKEILPLKISEDCLYLNIYSPADLTKSSQLPVMVWIHGGGLVIGGASPYNGLALSAHENVVVVTIQYRLGIWGLFSTGDEHSPGNWAHLDQLAALRWVQDNIANFGGNPDSVTIFGESSGGISVSVLVLSPLGKDLFHRAISESGVVINTNVGKKNIQAVNEIIATLSQCNDTSSAAMVQCLRQKTESELLEISGKLVQYNISLSTMIDGVVLPKAPEEILAEKSFNTVPYIVGFNKQEFGWIIPMMLQNLLPEGKMNEETASLLLRRFHSELNISESMIPAVIEQYLRGVDDPAKKSELILDMFGDIFFGIPAVLLSRSLRDAGVSTYMYEFRYRPSFVSDKRPQTVEGDHGDEIFFVFGAPLLKEGASEEETNLSKMVMKFWANFARNGNPNGEGLPHWPEYDEQEGYLQIGATTQQAQRLKAEEVAFWTELLAKNPPETDPTEHTEHK</sequence>
<name>EST1C_MOUSE</name>
<reference key="1">
    <citation type="journal article" date="1991" name="Genomics">
        <title>Characterization of a murine cDNA encoding a member of the carboxylesterase multigene family.</title>
        <authorList>
            <person name="Ovnic M."/>
            <person name="Tepperman K."/>
            <person name="Medda S."/>
            <person name="Elliott R.W."/>
            <person name="Stephenson D.A."/>
            <person name="Grant S.G."/>
            <person name="Ganschow R.E."/>
        </authorList>
    </citation>
    <scope>NUCLEOTIDE SEQUENCE [MRNA]</scope>
    <source>
        <strain>C57BL/6J</strain>
        <tissue>Liver</tissue>
    </source>
</reference>
<reference key="2">
    <citation type="journal article" date="1998" name="Am. J. Physiol.">
        <title>Molecular cloning, characterization, and differential expression pattern of mouse lung surfactant convertase.</title>
        <authorList>
            <person name="Krishnasamy S."/>
            <person name="Teng A.L."/>
            <person name="Dhand R."/>
            <person name="Schultz R.M."/>
            <person name="Gross N.J."/>
        </authorList>
    </citation>
    <scope>NUCLEOTIDE SEQUENCE [MRNA]</scope>
    <scope>PARTIAL PROTEIN SEQUENCE</scope>
    <scope>TISSUE SPECIFICITY</scope>
    <source>
        <strain>CF-1</strain>
        <tissue>Lung</tissue>
    </source>
</reference>
<reference key="3">
    <citation type="journal article" date="2009" name="PLoS Biol.">
        <title>Lineage-specific biology revealed by a finished genome assembly of the mouse.</title>
        <authorList>
            <person name="Church D.M."/>
            <person name="Goodstadt L."/>
            <person name="Hillier L.W."/>
            <person name="Zody M.C."/>
            <person name="Goldstein S."/>
            <person name="She X."/>
            <person name="Bult C.J."/>
            <person name="Agarwala R."/>
            <person name="Cherry J.L."/>
            <person name="DiCuccio M."/>
            <person name="Hlavina W."/>
            <person name="Kapustin Y."/>
            <person name="Meric P."/>
            <person name="Maglott D."/>
            <person name="Birtle Z."/>
            <person name="Marques A.C."/>
            <person name="Graves T."/>
            <person name="Zhou S."/>
            <person name="Teague B."/>
            <person name="Potamousis K."/>
            <person name="Churas C."/>
            <person name="Place M."/>
            <person name="Herschleb J."/>
            <person name="Runnheim R."/>
            <person name="Forrest D."/>
            <person name="Amos-Landgraf J."/>
            <person name="Schwartz D.C."/>
            <person name="Cheng Z."/>
            <person name="Lindblad-Toh K."/>
            <person name="Eichler E.E."/>
            <person name="Ponting C.P."/>
        </authorList>
    </citation>
    <scope>NUCLEOTIDE SEQUENCE [LARGE SCALE GENOMIC DNA]</scope>
    <source>
        <strain>C57BL/6J</strain>
    </source>
</reference>
<reference key="4">
    <citation type="journal article" date="2004" name="Genome Res.">
        <title>The status, quality, and expansion of the NIH full-length cDNA project: the Mammalian Gene Collection (MGC).</title>
        <authorList>
            <consortium name="The MGC Project Team"/>
        </authorList>
    </citation>
    <scope>NUCLEOTIDE SEQUENCE [LARGE SCALE MRNA]</scope>
    <source>
        <strain>FVB/N</strain>
        <tissue>Liver</tissue>
    </source>
</reference>
<reference key="5">
    <citation type="journal article" date="1988" name="Biochem. Biophys. Res. Commun.">
        <title>cDNA cloning of esterase 1, the major esterase activity in mouse plasma.</title>
        <authorList>
            <person name="Genetta T.L."/>
            <person name="D'Eustachio P."/>
            <person name="Kadner S.S."/>
            <person name="Finlay T.H."/>
        </authorList>
    </citation>
    <scope>NUCLEOTIDE SEQUENCE [MRNA] OF 487-554</scope>
</reference>
<reference key="6">
    <citation type="journal article" date="2006" name="J. Proteome Res.">
        <title>Proteome-wide characterization of N-glycosylation events by diagonal chromatography.</title>
        <authorList>
            <person name="Ghesquiere B."/>
            <person name="Van Damme J."/>
            <person name="Martens L."/>
            <person name="Vandekerckhove J."/>
            <person name="Gevaert K."/>
        </authorList>
    </citation>
    <scope>GLYCOSYLATION [LARGE SCALE ANALYSIS] AT ASN-304 AND ASN-377</scope>
    <source>
        <strain>C57BL/6J</strain>
        <tissue>Plasma</tissue>
    </source>
</reference>
<reference key="7">
    <citation type="journal article" date="2007" name="J. Proteome Res.">
        <title>Enhanced analysis of the mouse plasma proteome using cysteine-containing tryptic glycopeptides.</title>
        <authorList>
            <person name="Bernhard O.K."/>
            <person name="Kapp E.A."/>
            <person name="Simpson R.J."/>
        </authorList>
    </citation>
    <scope>GLYCOSYLATION [LARGE SCALE ANALYSIS] AT ASN-79; ASN-274; ASN-304 AND ASN-377</scope>
    <source>
        <strain>C57BL/6J</strain>
        <tissue>Plasma</tissue>
    </source>
</reference>
<reference key="8">
    <citation type="journal article" date="2010" name="Cell">
        <title>A tissue-specific atlas of mouse protein phosphorylation and expression.</title>
        <authorList>
            <person name="Huttlin E.L."/>
            <person name="Jedrychowski M.P."/>
            <person name="Elias J.E."/>
            <person name="Goswami T."/>
            <person name="Rad R."/>
            <person name="Beausoleil S.A."/>
            <person name="Villen J."/>
            <person name="Haas W."/>
            <person name="Sowa M.E."/>
            <person name="Gygi S.P."/>
        </authorList>
    </citation>
    <scope>IDENTIFICATION BY MASS SPECTROMETRY [LARGE SCALE ANALYSIS]</scope>
    <source>
        <tissue>Brain</tissue>
        <tissue>Brown adipose tissue</tissue>
        <tissue>Heart</tissue>
        <tissue>Kidney</tissue>
        <tissue>Liver</tissue>
        <tissue>Lung</tissue>
        <tissue>Pancreas</tissue>
        <tissue>Spleen</tissue>
        <tissue>Testis</tissue>
    </source>
</reference>